<accession>P11582</accession>
<protein>
    <recommendedName>
        <fullName>Globin CTT-E/E'</fullName>
    </recommendedName>
</protein>
<proteinExistence type="inferred from homology"/>
<comment type="similarity">
    <text evidence="1">Belongs to the globin family.</text>
</comment>
<feature type="signal peptide">
    <location>
        <begin position="1"/>
        <end position="15"/>
    </location>
</feature>
<feature type="chain" id="PRO_0000011212" description="Globin CTT-E/E'">
    <location>
        <begin position="16"/>
        <end position="152"/>
    </location>
</feature>
<feature type="domain" description="Globin" evidence="1">
    <location>
        <begin position="16"/>
        <end position="152"/>
    </location>
</feature>
<feature type="binding site" description="distal binding residue" evidence="1">
    <location>
        <position position="73"/>
    </location>
    <ligand>
        <name>heme b</name>
        <dbReference type="ChEBI" id="CHEBI:60344"/>
    </ligand>
    <ligandPart>
        <name>Fe</name>
        <dbReference type="ChEBI" id="CHEBI:18248"/>
    </ligandPart>
</feature>
<feature type="binding site" description="proximal binding residue" evidence="1">
    <location>
        <position position="102"/>
    </location>
    <ligand>
        <name>heme b</name>
        <dbReference type="ChEBI" id="CHEBI:60344"/>
    </ligand>
    <ligandPart>
        <name>Fe</name>
        <dbReference type="ChEBI" id="CHEBI:18248"/>
    </ligandPart>
</feature>
<organism>
    <name type="scientific">Chironomus thummi thummi</name>
    <name type="common">Midge</name>
    <dbReference type="NCBI Taxonomy" id="7155"/>
    <lineage>
        <taxon>Eukaryota</taxon>
        <taxon>Metazoa</taxon>
        <taxon>Ecdysozoa</taxon>
        <taxon>Arthropoda</taxon>
        <taxon>Hexapoda</taxon>
        <taxon>Insecta</taxon>
        <taxon>Pterygota</taxon>
        <taxon>Neoptera</taxon>
        <taxon>Endopterygota</taxon>
        <taxon>Diptera</taxon>
        <taxon>Nematocera</taxon>
        <taxon>Chironomoidea</taxon>
        <taxon>Chironomidae</taxon>
        <taxon>Chironominae</taxon>
        <taxon>Chironomus</taxon>
    </lineage>
</organism>
<name>GLBE_CHITH</name>
<reference key="1">
    <citation type="journal article" date="1987" name="Gene">
        <title>Genomic organization and primary structure of five homologous pairs of intron-less genes encoding secretory globins from the insect Chironomus thummi thummi.</title>
        <authorList>
            <person name="Antoine M."/>
            <person name="Erbil C."/>
            <person name="Muench E."/>
            <person name="Schnell S."/>
            <person name="Niessing J."/>
        </authorList>
    </citation>
    <scope>NUCLEOTIDE SEQUENCE [GENOMIC DNA]</scope>
</reference>
<reference key="2">
    <citation type="submission" date="1997-01" db="EMBL/GenBank/DDBJ databases">
        <authorList>
            <person name="Hankeln T."/>
            <person name="Amid C."/>
            <person name="Weich B."/>
            <person name="Schmidt E.R."/>
        </authorList>
    </citation>
    <scope>NUCLEOTIDE SEQUENCE [GENOMIC DNA]</scope>
</reference>
<sequence>MKFIILALCVAAASALSGDQIGLVQSTYGKVKGDSVGILYAVFKADPTIQAAFPQFVGKDLDAIKGGAEFSTHAGRIVGFLGGVIDDLPNIGKHVDALVATHKPRGVTHAQFNNFRAAFIAYLKGHVDYTAAVEAAWGATFDAFFGAVFAKM</sequence>
<keyword id="KW-0349">Heme</keyword>
<keyword id="KW-0408">Iron</keyword>
<keyword id="KW-0479">Metal-binding</keyword>
<keyword id="KW-0561">Oxygen transport</keyword>
<keyword id="KW-0732">Signal</keyword>
<keyword id="KW-0813">Transport</keyword>
<evidence type="ECO:0000255" key="1">
    <source>
        <dbReference type="PROSITE-ProRule" id="PRU00238"/>
    </source>
</evidence>
<dbReference type="EMBL" id="M17604">
    <property type="protein sequence ID" value="AAA28253.1"/>
    <property type="molecule type" value="Genomic_DNA"/>
</dbReference>
<dbReference type="EMBL" id="M17695">
    <property type="protein sequence ID" value="AAA28258.1"/>
    <property type="molecule type" value="Genomic_DNA"/>
</dbReference>
<dbReference type="EMBL" id="Y10622">
    <property type="protein sequence ID" value="CAA71643.1"/>
    <property type="molecule type" value="Genomic_DNA"/>
</dbReference>
<dbReference type="SMR" id="P11582"/>
<dbReference type="GO" id="GO:0005576">
    <property type="term" value="C:extracellular region"/>
    <property type="evidence" value="ECO:0007669"/>
    <property type="project" value="InterPro"/>
</dbReference>
<dbReference type="GO" id="GO:0005833">
    <property type="term" value="C:hemoglobin complex"/>
    <property type="evidence" value="ECO:0007669"/>
    <property type="project" value="InterPro"/>
</dbReference>
<dbReference type="GO" id="GO:0020037">
    <property type="term" value="F:heme binding"/>
    <property type="evidence" value="ECO:0007669"/>
    <property type="project" value="InterPro"/>
</dbReference>
<dbReference type="GO" id="GO:0046872">
    <property type="term" value="F:metal ion binding"/>
    <property type="evidence" value="ECO:0007669"/>
    <property type="project" value="UniProtKB-KW"/>
</dbReference>
<dbReference type="GO" id="GO:0019825">
    <property type="term" value="F:oxygen binding"/>
    <property type="evidence" value="ECO:0007669"/>
    <property type="project" value="InterPro"/>
</dbReference>
<dbReference type="GO" id="GO:0005344">
    <property type="term" value="F:oxygen carrier activity"/>
    <property type="evidence" value="ECO:0007669"/>
    <property type="project" value="UniProtKB-KW"/>
</dbReference>
<dbReference type="CDD" id="cd01040">
    <property type="entry name" value="Mb-like"/>
    <property type="match status" value="1"/>
</dbReference>
<dbReference type="Gene3D" id="1.10.490.10">
    <property type="entry name" value="Globins"/>
    <property type="match status" value="1"/>
</dbReference>
<dbReference type="InterPro" id="IPR002336">
    <property type="entry name" value="Erythrocruorin"/>
</dbReference>
<dbReference type="InterPro" id="IPR000971">
    <property type="entry name" value="Globin"/>
</dbReference>
<dbReference type="InterPro" id="IPR009050">
    <property type="entry name" value="Globin-like_sf"/>
</dbReference>
<dbReference type="InterPro" id="IPR012292">
    <property type="entry name" value="Globin/Proto"/>
</dbReference>
<dbReference type="InterPro" id="IPR044399">
    <property type="entry name" value="Mb-like_M"/>
</dbReference>
<dbReference type="PANTHER" id="PTHR47217">
    <property type="entry name" value="GLOBIN-LIKE PROTEIN"/>
    <property type="match status" value="1"/>
</dbReference>
<dbReference type="PANTHER" id="PTHR47217:SF1">
    <property type="entry name" value="GLOBIN-LIKE PROTEIN"/>
    <property type="match status" value="1"/>
</dbReference>
<dbReference type="Pfam" id="PF00042">
    <property type="entry name" value="Globin"/>
    <property type="match status" value="1"/>
</dbReference>
<dbReference type="PRINTS" id="PR00611">
    <property type="entry name" value="ERYTHCRUORIN"/>
</dbReference>
<dbReference type="SUPFAM" id="SSF46458">
    <property type="entry name" value="Globin-like"/>
    <property type="match status" value="1"/>
</dbReference>
<dbReference type="PROSITE" id="PS01033">
    <property type="entry name" value="GLOBIN"/>
    <property type="match status" value="1"/>
</dbReference>
<gene>
    <name type="primary">CTT-E</name>
</gene>
<gene>
    <name type="primary">CTT-E'</name>
</gene>